<reference key="1">
    <citation type="journal article" date="2008" name="J. Bacteriol.">
        <title>The pangenome structure of Escherichia coli: comparative genomic analysis of E. coli commensal and pathogenic isolates.</title>
        <authorList>
            <person name="Rasko D.A."/>
            <person name="Rosovitz M.J."/>
            <person name="Myers G.S.A."/>
            <person name="Mongodin E.F."/>
            <person name="Fricke W.F."/>
            <person name="Gajer P."/>
            <person name="Crabtree J."/>
            <person name="Sebaihia M."/>
            <person name="Thomson N.R."/>
            <person name="Chaudhuri R."/>
            <person name="Henderson I.R."/>
            <person name="Sperandio V."/>
            <person name="Ravel J."/>
        </authorList>
    </citation>
    <scope>NUCLEOTIDE SEQUENCE [LARGE SCALE GENOMIC DNA]</scope>
    <source>
        <strain>HS</strain>
    </source>
</reference>
<name>YCAR_ECOHS</name>
<proteinExistence type="inferred from homology"/>
<feature type="chain" id="PRO_1000065839" description="UPF0434 protein YcaR">
    <location>
        <begin position="1"/>
        <end position="60"/>
    </location>
</feature>
<comment type="similarity">
    <text evidence="1">Belongs to the UPF0434 family.</text>
</comment>
<protein>
    <recommendedName>
        <fullName evidence="1">UPF0434 protein YcaR</fullName>
    </recommendedName>
</protein>
<organism>
    <name type="scientific">Escherichia coli O9:H4 (strain HS)</name>
    <dbReference type="NCBI Taxonomy" id="331112"/>
    <lineage>
        <taxon>Bacteria</taxon>
        <taxon>Pseudomonadati</taxon>
        <taxon>Pseudomonadota</taxon>
        <taxon>Gammaproteobacteria</taxon>
        <taxon>Enterobacterales</taxon>
        <taxon>Enterobacteriaceae</taxon>
        <taxon>Escherichia</taxon>
    </lineage>
</organism>
<sequence>MDHRLLEIIACPVCNGKLWYNQEKQELICKLDNLAFPLRDGIPVLLETEARVLTADESKS</sequence>
<evidence type="ECO:0000255" key="1">
    <source>
        <dbReference type="HAMAP-Rule" id="MF_01187"/>
    </source>
</evidence>
<dbReference type="EMBL" id="CP000802">
    <property type="protein sequence ID" value="ABV05373.1"/>
    <property type="molecule type" value="Genomic_DNA"/>
</dbReference>
<dbReference type="RefSeq" id="WP_000350058.1">
    <property type="nucleotide sequence ID" value="NC_009800.1"/>
</dbReference>
<dbReference type="SMR" id="A7ZYL9"/>
<dbReference type="GeneID" id="93776498"/>
<dbReference type="KEGG" id="ecx:EcHS_A1024"/>
<dbReference type="HOGENOM" id="CLU_155659_3_1_6"/>
<dbReference type="GO" id="GO:0005829">
    <property type="term" value="C:cytosol"/>
    <property type="evidence" value="ECO:0007669"/>
    <property type="project" value="TreeGrafter"/>
</dbReference>
<dbReference type="FunFam" id="2.20.25.10:FF:000002">
    <property type="entry name" value="UPF0434 protein YcaR"/>
    <property type="match status" value="1"/>
</dbReference>
<dbReference type="Gene3D" id="2.20.25.10">
    <property type="match status" value="1"/>
</dbReference>
<dbReference type="HAMAP" id="MF_01187">
    <property type="entry name" value="UPF0434"/>
    <property type="match status" value="1"/>
</dbReference>
<dbReference type="InterPro" id="IPR005651">
    <property type="entry name" value="Trm112-like"/>
</dbReference>
<dbReference type="NCBIfam" id="NF008806">
    <property type="entry name" value="PRK11827.1"/>
    <property type="match status" value="1"/>
</dbReference>
<dbReference type="PANTHER" id="PTHR33505:SF4">
    <property type="entry name" value="PROTEIN PREY, MITOCHONDRIAL"/>
    <property type="match status" value="1"/>
</dbReference>
<dbReference type="PANTHER" id="PTHR33505">
    <property type="entry name" value="ZGC:162634"/>
    <property type="match status" value="1"/>
</dbReference>
<dbReference type="Pfam" id="PF03966">
    <property type="entry name" value="Trm112p"/>
    <property type="match status" value="1"/>
</dbReference>
<dbReference type="SUPFAM" id="SSF158997">
    <property type="entry name" value="Trm112p-like"/>
    <property type="match status" value="1"/>
</dbReference>
<gene>
    <name evidence="1" type="primary">ycaR</name>
    <name type="ordered locus">EcHS_A1024</name>
</gene>
<accession>A7ZYL9</accession>